<proteinExistence type="evidence at protein level"/>
<dbReference type="EMBL" id="S56498">
    <property type="protein sequence ID" value="AAB25701.1"/>
    <property type="molecule type" value="mRNA"/>
</dbReference>
<dbReference type="PIR" id="JC6092">
    <property type="entry name" value="JC6092"/>
</dbReference>
<dbReference type="SMR" id="Q07053"/>
<dbReference type="VEuPathDB" id="TriTrypDB:CFAC1_280066300"/>
<dbReference type="GO" id="GO:0020023">
    <property type="term" value="C:kinetoplast"/>
    <property type="evidence" value="ECO:0000314"/>
    <property type="project" value="UniProtKB"/>
</dbReference>
<dbReference type="GO" id="GO:0005759">
    <property type="term" value="C:mitochondrial matrix"/>
    <property type="evidence" value="ECO:0000314"/>
    <property type="project" value="UniProtKB"/>
</dbReference>
<dbReference type="GO" id="GO:0003677">
    <property type="term" value="F:DNA binding"/>
    <property type="evidence" value="ECO:0000314"/>
    <property type="project" value="UniProtKB"/>
</dbReference>
<dbReference type="CDD" id="cd00084">
    <property type="entry name" value="HMG-box_SF"/>
    <property type="match status" value="1"/>
</dbReference>
<dbReference type="Gene3D" id="1.10.30.10">
    <property type="entry name" value="High mobility group box domain"/>
    <property type="match status" value="1"/>
</dbReference>
<dbReference type="InterPro" id="IPR009071">
    <property type="entry name" value="HMG_box_dom"/>
</dbReference>
<dbReference type="InterPro" id="IPR036910">
    <property type="entry name" value="HMG_box_dom_sf"/>
</dbReference>
<dbReference type="InterPro" id="IPR052695">
    <property type="entry name" value="Kinetoplast-DNA-binding"/>
</dbReference>
<dbReference type="PANTHER" id="PTHR37564:SF2">
    <property type="entry name" value="DNA-ASSOCIATED PROTEIN, PUTATIVE-RELATED"/>
    <property type="match status" value="1"/>
</dbReference>
<dbReference type="PANTHER" id="PTHR37564">
    <property type="entry name" value="KINETOPLAST DNA-ASSOCIATED PROTEIN"/>
    <property type="match status" value="1"/>
</dbReference>
<dbReference type="SMART" id="SM00398">
    <property type="entry name" value="HMG"/>
    <property type="match status" value="1"/>
</dbReference>
<dbReference type="SUPFAM" id="SSF47095">
    <property type="entry name" value="HMG-box"/>
    <property type="match status" value="1"/>
</dbReference>
<evidence type="ECO:0000256" key="1">
    <source>
        <dbReference type="SAM" id="MobiDB-lite"/>
    </source>
</evidence>
<evidence type="ECO:0000269" key="2">
    <source>
    </source>
</evidence>
<evidence type="ECO:0000269" key="3">
    <source>
    </source>
</evidence>
<evidence type="ECO:0000305" key="4"/>
<gene>
    <name type="primary">KAP4</name>
</gene>
<sequence length="128" mass="14590">MLRFVPRRLAIGAYTLFMMEQKNNPKLKGLKIADRGKMTSKLYKALNPNDKAALEKRAAAHPGFKRKEKEPKELKAAKAAKTSTPRAPSEYAKFVQANIGRFEKLPHLDRMKAVAKLWKQQQMRTGKP</sequence>
<comment type="function">
    <text evidence="3">Histone H1-like DNA-binding protein involved in the organization and segregation of kinetoplast DNA (kDNA). The mitochondrial DNA of kinetoplastid protozoa consists of about 5,000 minicircles and 20 to 30 maxicircles. These circular DNAs are held together by catenation into a highly organized compact disk structure referred to as a kinetoplast DNA (kDNA) network. Binds preferentially to a specific fragment of minicircle DNA and is able to compact kDNA networks through DNA charge neutralization and condensation.</text>
</comment>
<comment type="subunit">
    <text>Associates with the kinetoplast DNA network.</text>
</comment>
<comment type="subcellular location">
    <subcellularLocation>
        <location evidence="2 3">Mitochondrion matrix</location>
        <location evidence="2 3">Kinetoplast</location>
    </subcellularLocation>
    <subcellularLocation>
        <location evidence="2 3">Mitochondrion matrix</location>
    </subcellularLocation>
    <text evidence="3">Present both within the kDNA disk and in the mitochondrial matrix at opposite edges of the kDNA disk.</text>
</comment>
<comment type="similarity">
    <text evidence="4">Belongs to the KAP family.</text>
</comment>
<accession>Q07053</accession>
<keyword id="KW-0903">Direct protein sequencing</keyword>
<keyword id="KW-0238">DNA-binding</keyword>
<keyword id="KW-0419">Kinetoplast</keyword>
<keyword id="KW-0496">Mitochondrion</keyword>
<name>KAP4_CRIFA</name>
<organism>
    <name type="scientific">Crithidia fasciculata</name>
    <dbReference type="NCBI Taxonomy" id="5656"/>
    <lineage>
        <taxon>Eukaryota</taxon>
        <taxon>Discoba</taxon>
        <taxon>Euglenozoa</taxon>
        <taxon>Kinetoplastea</taxon>
        <taxon>Metakinetoplastina</taxon>
        <taxon>Trypanosomatida</taxon>
        <taxon>Trypanosomatidae</taxon>
        <taxon>Leishmaniinae</taxon>
        <taxon>Crithidia</taxon>
    </lineage>
</organism>
<protein>
    <recommendedName>
        <fullName>Kinetoplast-associated protein 4</fullName>
    </recommendedName>
    <alternativeName>
        <fullName>Histone H1-like protein p16</fullName>
    </alternativeName>
</protein>
<feature type="propeptide" id="PRO_0000409304">
    <location>
        <begin position="1"/>
        <end position="10"/>
    </location>
</feature>
<feature type="chain" id="PRO_0000409305" description="Kinetoplast-associated protein 4">
    <location>
        <begin position="11"/>
        <end position="128"/>
    </location>
</feature>
<feature type="region of interest" description="Disordered" evidence="1">
    <location>
        <begin position="60"/>
        <end position="87"/>
    </location>
</feature>
<feature type="compositionally biased region" description="Basic and acidic residues" evidence="1">
    <location>
        <begin position="65"/>
        <end position="76"/>
    </location>
</feature>
<reference key="1">
    <citation type="journal article" date="1996" name="Mol. Cell. Biol.">
        <title>Nucleus-encoded histone H1-like proteins are associated with kinetoplast DNA in the trypanosomatid Crithidia fasciculata.</title>
        <authorList>
            <person name="Xu C.W."/>
            <person name="Hines J.C."/>
            <person name="Engel M.L."/>
            <person name="Russell D.G."/>
            <person name="Ray D.S."/>
        </authorList>
    </citation>
    <scope>NUCLEOTIDE SEQUENCE [MRNA]</scope>
    <scope>DNA-BINDING</scope>
    <scope>FUNCTION</scope>
    <scope>SUBCELLULAR LOCATION</scope>
</reference>
<reference key="2">
    <citation type="journal article" date="1993" name="Proc. Natl. Acad. Sci. U.S.A.">
        <title>Isolation of proteins associated with kinetoplast DNA networks in vivo.</title>
        <authorList>
            <person name="Xu C."/>
            <person name="Ray D.S."/>
        </authorList>
    </citation>
    <scope>NUCLEOTIDE SEQUENCE [MRNA] OF 1-24</scope>
    <scope>PROTEIN SEQUENCE OF 10-24</scope>
    <scope>DNA-BINDING</scope>
    <scope>SUBCELLULAR LOCATION</scope>
</reference>